<proteinExistence type="inferred from homology"/>
<keyword id="KW-0030">Aminoacyl-tRNA synthetase</keyword>
<keyword id="KW-0067">ATP-binding</keyword>
<keyword id="KW-0963">Cytoplasm</keyword>
<keyword id="KW-0436">Ligase</keyword>
<keyword id="KW-0547">Nucleotide-binding</keyword>
<keyword id="KW-0648">Protein biosynthesis</keyword>
<feature type="chain" id="PRO_1000076281" description="Histidine--tRNA ligase">
    <location>
        <begin position="1"/>
        <end position="429"/>
    </location>
</feature>
<protein>
    <recommendedName>
        <fullName evidence="1">Histidine--tRNA ligase</fullName>
        <ecNumber evidence="1">6.1.1.21</ecNumber>
    </recommendedName>
    <alternativeName>
        <fullName evidence="1">Histidyl-tRNA synthetase</fullName>
        <shortName evidence="1">HisRS</shortName>
    </alternativeName>
</protein>
<reference key="1">
    <citation type="submission" date="2008-01" db="EMBL/GenBank/DDBJ databases">
        <title>Complete sequence of Pseudomonas putida GB-1.</title>
        <authorList>
            <consortium name="US DOE Joint Genome Institute"/>
            <person name="Copeland A."/>
            <person name="Lucas S."/>
            <person name="Lapidus A."/>
            <person name="Barry K."/>
            <person name="Glavina del Rio T."/>
            <person name="Dalin E."/>
            <person name="Tice H."/>
            <person name="Pitluck S."/>
            <person name="Bruce D."/>
            <person name="Goodwin L."/>
            <person name="Chertkov O."/>
            <person name="Brettin T."/>
            <person name="Detter J.C."/>
            <person name="Han C."/>
            <person name="Kuske C.R."/>
            <person name="Schmutz J."/>
            <person name="Larimer F."/>
            <person name="Land M."/>
            <person name="Hauser L."/>
            <person name="Kyrpides N."/>
            <person name="Kim E."/>
            <person name="McCarthy J.K."/>
            <person name="Richardson P."/>
        </authorList>
    </citation>
    <scope>NUCLEOTIDE SEQUENCE [LARGE SCALE GENOMIC DNA]</scope>
    <source>
        <strain>GB-1</strain>
    </source>
</reference>
<dbReference type="EC" id="6.1.1.21" evidence="1"/>
<dbReference type="EMBL" id="CP000926">
    <property type="protein sequence ID" value="ABY96807.1"/>
    <property type="molecule type" value="Genomic_DNA"/>
</dbReference>
<dbReference type="RefSeq" id="WP_003248516.1">
    <property type="nucleotide sequence ID" value="NC_010322.1"/>
</dbReference>
<dbReference type="SMR" id="B0KPI8"/>
<dbReference type="KEGG" id="ppg:PputGB1_0897"/>
<dbReference type="eggNOG" id="COG0124">
    <property type="taxonomic scope" value="Bacteria"/>
</dbReference>
<dbReference type="HOGENOM" id="CLU_025113_1_1_6"/>
<dbReference type="Proteomes" id="UP000002157">
    <property type="component" value="Chromosome"/>
</dbReference>
<dbReference type="GO" id="GO:0005737">
    <property type="term" value="C:cytoplasm"/>
    <property type="evidence" value="ECO:0007669"/>
    <property type="project" value="UniProtKB-SubCell"/>
</dbReference>
<dbReference type="GO" id="GO:0005524">
    <property type="term" value="F:ATP binding"/>
    <property type="evidence" value="ECO:0007669"/>
    <property type="project" value="UniProtKB-UniRule"/>
</dbReference>
<dbReference type="GO" id="GO:0004821">
    <property type="term" value="F:histidine-tRNA ligase activity"/>
    <property type="evidence" value="ECO:0007669"/>
    <property type="project" value="UniProtKB-UniRule"/>
</dbReference>
<dbReference type="GO" id="GO:0006427">
    <property type="term" value="P:histidyl-tRNA aminoacylation"/>
    <property type="evidence" value="ECO:0007669"/>
    <property type="project" value="UniProtKB-UniRule"/>
</dbReference>
<dbReference type="CDD" id="cd00773">
    <property type="entry name" value="HisRS-like_core"/>
    <property type="match status" value="1"/>
</dbReference>
<dbReference type="CDD" id="cd00859">
    <property type="entry name" value="HisRS_anticodon"/>
    <property type="match status" value="1"/>
</dbReference>
<dbReference type="FunFam" id="3.30.930.10:FF:000005">
    <property type="entry name" value="Histidine--tRNA ligase"/>
    <property type="match status" value="1"/>
</dbReference>
<dbReference type="Gene3D" id="3.40.50.800">
    <property type="entry name" value="Anticodon-binding domain"/>
    <property type="match status" value="1"/>
</dbReference>
<dbReference type="Gene3D" id="3.30.930.10">
    <property type="entry name" value="Bira Bifunctional Protein, Domain 2"/>
    <property type="match status" value="1"/>
</dbReference>
<dbReference type="HAMAP" id="MF_00127">
    <property type="entry name" value="His_tRNA_synth"/>
    <property type="match status" value="1"/>
</dbReference>
<dbReference type="InterPro" id="IPR006195">
    <property type="entry name" value="aa-tRNA-synth_II"/>
</dbReference>
<dbReference type="InterPro" id="IPR045864">
    <property type="entry name" value="aa-tRNA-synth_II/BPL/LPL"/>
</dbReference>
<dbReference type="InterPro" id="IPR004154">
    <property type="entry name" value="Anticodon-bd"/>
</dbReference>
<dbReference type="InterPro" id="IPR036621">
    <property type="entry name" value="Anticodon-bd_dom_sf"/>
</dbReference>
<dbReference type="InterPro" id="IPR015807">
    <property type="entry name" value="His-tRNA-ligase"/>
</dbReference>
<dbReference type="InterPro" id="IPR041715">
    <property type="entry name" value="HisRS-like_core"/>
</dbReference>
<dbReference type="InterPro" id="IPR004516">
    <property type="entry name" value="HisRS/HisZ"/>
</dbReference>
<dbReference type="InterPro" id="IPR033656">
    <property type="entry name" value="HisRS_anticodon"/>
</dbReference>
<dbReference type="NCBIfam" id="TIGR00442">
    <property type="entry name" value="hisS"/>
    <property type="match status" value="1"/>
</dbReference>
<dbReference type="PANTHER" id="PTHR43707:SF1">
    <property type="entry name" value="HISTIDINE--TRNA LIGASE, MITOCHONDRIAL-RELATED"/>
    <property type="match status" value="1"/>
</dbReference>
<dbReference type="PANTHER" id="PTHR43707">
    <property type="entry name" value="HISTIDYL-TRNA SYNTHETASE"/>
    <property type="match status" value="1"/>
</dbReference>
<dbReference type="Pfam" id="PF03129">
    <property type="entry name" value="HGTP_anticodon"/>
    <property type="match status" value="1"/>
</dbReference>
<dbReference type="Pfam" id="PF13393">
    <property type="entry name" value="tRNA-synt_His"/>
    <property type="match status" value="1"/>
</dbReference>
<dbReference type="PIRSF" id="PIRSF001549">
    <property type="entry name" value="His-tRNA_synth"/>
    <property type="match status" value="1"/>
</dbReference>
<dbReference type="SUPFAM" id="SSF52954">
    <property type="entry name" value="Class II aaRS ABD-related"/>
    <property type="match status" value="1"/>
</dbReference>
<dbReference type="SUPFAM" id="SSF55681">
    <property type="entry name" value="Class II aaRS and biotin synthetases"/>
    <property type="match status" value="1"/>
</dbReference>
<dbReference type="PROSITE" id="PS50862">
    <property type="entry name" value="AA_TRNA_LIGASE_II"/>
    <property type="match status" value="1"/>
</dbReference>
<gene>
    <name evidence="1" type="primary">hisS</name>
    <name type="ordered locus">PputGB1_0897</name>
</gene>
<comment type="catalytic activity">
    <reaction evidence="1">
        <text>tRNA(His) + L-histidine + ATP = L-histidyl-tRNA(His) + AMP + diphosphate + H(+)</text>
        <dbReference type="Rhea" id="RHEA:17313"/>
        <dbReference type="Rhea" id="RHEA-COMP:9665"/>
        <dbReference type="Rhea" id="RHEA-COMP:9689"/>
        <dbReference type="ChEBI" id="CHEBI:15378"/>
        <dbReference type="ChEBI" id="CHEBI:30616"/>
        <dbReference type="ChEBI" id="CHEBI:33019"/>
        <dbReference type="ChEBI" id="CHEBI:57595"/>
        <dbReference type="ChEBI" id="CHEBI:78442"/>
        <dbReference type="ChEBI" id="CHEBI:78527"/>
        <dbReference type="ChEBI" id="CHEBI:456215"/>
        <dbReference type="EC" id="6.1.1.21"/>
    </reaction>
</comment>
<comment type="subunit">
    <text evidence="1">Homodimer.</text>
</comment>
<comment type="subcellular location">
    <subcellularLocation>
        <location evidence="1">Cytoplasm</location>
    </subcellularLocation>
</comment>
<comment type="similarity">
    <text evidence="1">Belongs to the class-II aminoacyl-tRNA synthetase family.</text>
</comment>
<sequence length="429" mass="47738">MSKSLQAIRGMNDILPEQSPLWRYFEGTVAGLLDTYGYSQIRTPIVEFTELFKRSIGEVTDIVEKEMYTFEDRNGDSLTLRPEGTAACVRAVLEHGITGNGQVQKLWYIGQMFRHERPQKGRYRQFHQIGVEVFNLDGPDIDAELIMLTWRLWGLLGIQDAVKLELNSLGTSEARARYRDALVEFLSARLEQLDEDSQRRLKSNPLRILDSKDQNTQAVLVGAPKLEDYLDEESRVHFEGLKARLDAAGIPFVINTKLVRGLDYYSKTVFEWVTDKLGAQGTVCAGGRYDGLVEQMGGKPTTGVGFAMGIERLILLLETLGKVPESISRQIDVYLCAFGEQAELAGLRLSEGLRDRLPGLRLAVNAGGGSFKSQFKKADKSGALFALILGDDELAKQEIGLKPLRGQGEQQNIAWDALAEHLETAIAQA</sequence>
<name>SYH_PSEPG</name>
<evidence type="ECO:0000255" key="1">
    <source>
        <dbReference type="HAMAP-Rule" id="MF_00127"/>
    </source>
</evidence>
<accession>B0KPI8</accession>
<organism>
    <name type="scientific">Pseudomonas putida (strain GB-1)</name>
    <dbReference type="NCBI Taxonomy" id="76869"/>
    <lineage>
        <taxon>Bacteria</taxon>
        <taxon>Pseudomonadati</taxon>
        <taxon>Pseudomonadota</taxon>
        <taxon>Gammaproteobacteria</taxon>
        <taxon>Pseudomonadales</taxon>
        <taxon>Pseudomonadaceae</taxon>
        <taxon>Pseudomonas</taxon>
    </lineage>
</organism>